<comment type="function">
    <text evidence="1">Catalyzes the reversible phosphorylation of UMP to UDP.</text>
</comment>
<comment type="catalytic activity">
    <reaction evidence="1">
        <text>UMP + ATP = UDP + ADP</text>
        <dbReference type="Rhea" id="RHEA:24400"/>
        <dbReference type="ChEBI" id="CHEBI:30616"/>
        <dbReference type="ChEBI" id="CHEBI:57865"/>
        <dbReference type="ChEBI" id="CHEBI:58223"/>
        <dbReference type="ChEBI" id="CHEBI:456216"/>
        <dbReference type="EC" id="2.7.4.22"/>
    </reaction>
</comment>
<comment type="activity regulation">
    <text evidence="1">Allosterically activated by GTP. Inhibited by UTP.</text>
</comment>
<comment type="pathway">
    <text evidence="1">Pyrimidine metabolism; CTP biosynthesis via de novo pathway; UDP from UMP (UMPK route): step 1/1.</text>
</comment>
<comment type="subunit">
    <text evidence="1">Homohexamer.</text>
</comment>
<comment type="subcellular location">
    <subcellularLocation>
        <location evidence="1">Cytoplasm</location>
    </subcellularLocation>
</comment>
<comment type="similarity">
    <text evidence="1">Belongs to the UMP kinase family.</text>
</comment>
<name>PYRH_SHISS</name>
<protein>
    <recommendedName>
        <fullName evidence="1">Uridylate kinase</fullName>
        <shortName evidence="1">UK</shortName>
        <ecNumber evidence="1">2.7.4.22</ecNumber>
    </recommendedName>
    <alternativeName>
        <fullName evidence="1">Uridine monophosphate kinase</fullName>
        <shortName evidence="1">UMP kinase</shortName>
        <shortName evidence="1">UMPK</shortName>
    </alternativeName>
</protein>
<evidence type="ECO:0000255" key="1">
    <source>
        <dbReference type="HAMAP-Rule" id="MF_01220"/>
    </source>
</evidence>
<gene>
    <name evidence="1" type="primary">pyrH</name>
    <name type="ordered locus">SSON_0183</name>
</gene>
<accession>Q3Z5I7</accession>
<keyword id="KW-0021">Allosteric enzyme</keyword>
<keyword id="KW-0067">ATP-binding</keyword>
<keyword id="KW-0963">Cytoplasm</keyword>
<keyword id="KW-0418">Kinase</keyword>
<keyword id="KW-0547">Nucleotide-binding</keyword>
<keyword id="KW-0665">Pyrimidine biosynthesis</keyword>
<keyword id="KW-1185">Reference proteome</keyword>
<keyword id="KW-0808">Transferase</keyword>
<organism>
    <name type="scientific">Shigella sonnei (strain Ss046)</name>
    <dbReference type="NCBI Taxonomy" id="300269"/>
    <lineage>
        <taxon>Bacteria</taxon>
        <taxon>Pseudomonadati</taxon>
        <taxon>Pseudomonadota</taxon>
        <taxon>Gammaproteobacteria</taxon>
        <taxon>Enterobacterales</taxon>
        <taxon>Enterobacteriaceae</taxon>
        <taxon>Shigella</taxon>
    </lineage>
</organism>
<reference key="1">
    <citation type="journal article" date="2005" name="Nucleic Acids Res.">
        <title>Genome dynamics and diversity of Shigella species, the etiologic agents of bacillary dysentery.</title>
        <authorList>
            <person name="Yang F."/>
            <person name="Yang J."/>
            <person name="Zhang X."/>
            <person name="Chen L."/>
            <person name="Jiang Y."/>
            <person name="Yan Y."/>
            <person name="Tang X."/>
            <person name="Wang J."/>
            <person name="Xiong Z."/>
            <person name="Dong J."/>
            <person name="Xue Y."/>
            <person name="Zhu Y."/>
            <person name="Xu X."/>
            <person name="Sun L."/>
            <person name="Chen S."/>
            <person name="Nie H."/>
            <person name="Peng J."/>
            <person name="Xu J."/>
            <person name="Wang Y."/>
            <person name="Yuan Z."/>
            <person name="Wen Y."/>
            <person name="Yao Z."/>
            <person name="Shen Y."/>
            <person name="Qiang B."/>
            <person name="Hou Y."/>
            <person name="Yu J."/>
            <person name="Jin Q."/>
        </authorList>
    </citation>
    <scope>NUCLEOTIDE SEQUENCE [LARGE SCALE GENOMIC DNA]</scope>
    <source>
        <strain>Ss046</strain>
    </source>
</reference>
<feature type="chain" id="PRO_1000054019" description="Uridylate kinase">
    <location>
        <begin position="1"/>
        <end position="241"/>
    </location>
</feature>
<feature type="region of interest" description="Involved in allosteric activation by GTP" evidence="1">
    <location>
        <begin position="23"/>
        <end position="28"/>
    </location>
</feature>
<feature type="binding site" evidence="1">
    <location>
        <begin position="15"/>
        <end position="18"/>
    </location>
    <ligand>
        <name>ATP</name>
        <dbReference type="ChEBI" id="CHEBI:30616"/>
    </ligand>
</feature>
<feature type="binding site" evidence="1">
    <location>
        <position position="57"/>
    </location>
    <ligand>
        <name>UMP</name>
        <dbReference type="ChEBI" id="CHEBI:57865"/>
    </ligand>
</feature>
<feature type="binding site" evidence="1">
    <location>
        <position position="58"/>
    </location>
    <ligand>
        <name>ATP</name>
        <dbReference type="ChEBI" id="CHEBI:30616"/>
    </ligand>
</feature>
<feature type="binding site" evidence="1">
    <location>
        <position position="62"/>
    </location>
    <ligand>
        <name>ATP</name>
        <dbReference type="ChEBI" id="CHEBI:30616"/>
    </ligand>
</feature>
<feature type="binding site" evidence="1">
    <location>
        <position position="77"/>
    </location>
    <ligand>
        <name>UMP</name>
        <dbReference type="ChEBI" id="CHEBI:57865"/>
    </ligand>
</feature>
<feature type="binding site" evidence="1">
    <location>
        <begin position="138"/>
        <end position="145"/>
    </location>
    <ligand>
        <name>UMP</name>
        <dbReference type="ChEBI" id="CHEBI:57865"/>
    </ligand>
</feature>
<feature type="binding site" evidence="1">
    <location>
        <position position="165"/>
    </location>
    <ligand>
        <name>ATP</name>
        <dbReference type="ChEBI" id="CHEBI:30616"/>
    </ligand>
</feature>
<feature type="binding site" evidence="1">
    <location>
        <position position="171"/>
    </location>
    <ligand>
        <name>ATP</name>
        <dbReference type="ChEBI" id="CHEBI:30616"/>
    </ligand>
</feature>
<feature type="binding site" evidence="1">
    <location>
        <position position="174"/>
    </location>
    <ligand>
        <name>ATP</name>
        <dbReference type="ChEBI" id="CHEBI:30616"/>
    </ligand>
</feature>
<dbReference type="EC" id="2.7.4.22" evidence="1"/>
<dbReference type="EMBL" id="CP000038">
    <property type="protein sequence ID" value="AAZ86975.1"/>
    <property type="molecule type" value="Genomic_DNA"/>
</dbReference>
<dbReference type="RefSeq" id="WP_000224573.1">
    <property type="nucleotide sequence ID" value="NC_007384.1"/>
</dbReference>
<dbReference type="SMR" id="Q3Z5I7"/>
<dbReference type="GeneID" id="93777254"/>
<dbReference type="KEGG" id="ssn:SSON_0183"/>
<dbReference type="HOGENOM" id="CLU_033861_0_0_6"/>
<dbReference type="UniPathway" id="UPA00159">
    <property type="reaction ID" value="UER00275"/>
</dbReference>
<dbReference type="Proteomes" id="UP000002529">
    <property type="component" value="Chromosome"/>
</dbReference>
<dbReference type="GO" id="GO:0005829">
    <property type="term" value="C:cytosol"/>
    <property type="evidence" value="ECO:0007669"/>
    <property type="project" value="TreeGrafter"/>
</dbReference>
<dbReference type="GO" id="GO:0005524">
    <property type="term" value="F:ATP binding"/>
    <property type="evidence" value="ECO:0007669"/>
    <property type="project" value="UniProtKB-KW"/>
</dbReference>
<dbReference type="GO" id="GO:0033862">
    <property type="term" value="F:UMP kinase activity"/>
    <property type="evidence" value="ECO:0007669"/>
    <property type="project" value="UniProtKB-EC"/>
</dbReference>
<dbReference type="GO" id="GO:0044210">
    <property type="term" value="P:'de novo' CTP biosynthetic process"/>
    <property type="evidence" value="ECO:0007669"/>
    <property type="project" value="UniProtKB-UniRule"/>
</dbReference>
<dbReference type="GO" id="GO:0006225">
    <property type="term" value="P:UDP biosynthetic process"/>
    <property type="evidence" value="ECO:0007669"/>
    <property type="project" value="TreeGrafter"/>
</dbReference>
<dbReference type="CDD" id="cd04254">
    <property type="entry name" value="AAK_UMPK-PyrH-Ec"/>
    <property type="match status" value="1"/>
</dbReference>
<dbReference type="FunFam" id="3.40.1160.10:FF:000001">
    <property type="entry name" value="Uridylate kinase"/>
    <property type="match status" value="1"/>
</dbReference>
<dbReference type="Gene3D" id="3.40.1160.10">
    <property type="entry name" value="Acetylglutamate kinase-like"/>
    <property type="match status" value="1"/>
</dbReference>
<dbReference type="HAMAP" id="MF_01220_B">
    <property type="entry name" value="PyrH_B"/>
    <property type="match status" value="1"/>
</dbReference>
<dbReference type="InterPro" id="IPR036393">
    <property type="entry name" value="AceGlu_kinase-like_sf"/>
</dbReference>
<dbReference type="InterPro" id="IPR001048">
    <property type="entry name" value="Asp/Glu/Uridylate_kinase"/>
</dbReference>
<dbReference type="InterPro" id="IPR011817">
    <property type="entry name" value="Uridylate_kinase"/>
</dbReference>
<dbReference type="InterPro" id="IPR015963">
    <property type="entry name" value="Uridylate_kinase_bac"/>
</dbReference>
<dbReference type="NCBIfam" id="TIGR02075">
    <property type="entry name" value="pyrH_bact"/>
    <property type="match status" value="1"/>
</dbReference>
<dbReference type="PANTHER" id="PTHR42833">
    <property type="entry name" value="URIDYLATE KINASE"/>
    <property type="match status" value="1"/>
</dbReference>
<dbReference type="PANTHER" id="PTHR42833:SF4">
    <property type="entry name" value="URIDYLATE KINASE PUMPKIN, CHLOROPLASTIC"/>
    <property type="match status" value="1"/>
</dbReference>
<dbReference type="Pfam" id="PF00696">
    <property type="entry name" value="AA_kinase"/>
    <property type="match status" value="1"/>
</dbReference>
<dbReference type="PIRSF" id="PIRSF005650">
    <property type="entry name" value="Uridylate_kin"/>
    <property type="match status" value="1"/>
</dbReference>
<dbReference type="SUPFAM" id="SSF53633">
    <property type="entry name" value="Carbamate kinase-like"/>
    <property type="match status" value="1"/>
</dbReference>
<sequence>MATNAKPVYKRILLKLSGEALQGTEGFGIDASILDRMAQEIKELVELGIQVGVVIGGGNLFRGAGLAKAGMNRVVGDHMGMLATVMNGLAMRDALHRAYVNARLMSAIPLNGVCDSYSWAEAISLLRNNRVVILSAGTGNPFFTTDSAACLRGIEIEADVVLKATKVDGVFTADPAKDPTATMYEQLTYSEVLEKELKVMDLAAFTLARDHKLPIRVFNMNKPGALRRVVMGEKEGTLITE</sequence>
<proteinExistence type="inferred from homology"/>